<gene>
    <name type="primary">Wee1</name>
</gene>
<sequence length="646" mass="71578">MSFLSRQQPPPTRRVGAAYSLRQKLIFSPGSDCEEEEEEEEEGSGHSTGEDSAFQEPDSPLPSARSPAEAEAERRRRSPGAEPSSPGELEDDLLLQGGGGGAQAAGGGAEGDSWEEEGFGSSSPVKSPSTAYFLSSPFSPVRCGGPGDASPQGCGAPRAMDDPCSPQPDYPSTPPHKTFRKLRLFDTPHTPKSLLSKARVIDSGSVKLRGSSLFMDTEKSGKREFDTRQTPQVNINPFTPDPVLLHSSGRCRGRKRAYFNDSSEDMEASDYEFEDETRPAKRITITESNMKSRYTTEFHELEKIGSGEFGSVFKCVKRLDGCIYAIKRSKKPLAGSVDEQNALREVYAHAVLGQHPHVVRYFSAWAEDDHMLIQNEYCNGGSLADAISENYRVMSYLTEVELKDLLLQVGRGLRYIHSMSLVHMDIKPSNIFISRTSIPNAVSEEGDEDDWISNKVMFKIGDLGHVTRISSPQVEEGDSRFLANEVLQENYSHLPKADIFALALTVVCAAGAEPLPRNGEQWHEIRQGRLPRIPQVLSQEVTELLRVMIHPDPERRPSAMELVKHSVLLSASRKSAEQLRIELNAEKFKNSLLQKELKKAQMAAKVAAEERALFTDRMATRSTTQSNRTSRLIGKKMNRSVSLTIY</sequence>
<reference key="1">
    <citation type="journal article" date="1995" name="Chromosome Res.">
        <title>Mouse p87wee1 kinase is regulated by M-phase specific phosphorylation.</title>
        <authorList>
            <person name="Honda R."/>
            <person name="Tanaka H."/>
            <person name="Ohba Y."/>
            <person name="Yasuda H."/>
        </authorList>
    </citation>
    <scope>NUCLEOTIDE SEQUENCE [MRNA]</scope>
    <source>
        <strain>C57BL/6J</strain>
        <tissue>Calvaria</tissue>
    </source>
</reference>
<reference key="2">
    <citation type="journal article" date="2001" name="Cytogenet. Cell Genet.">
        <title>Comparative architectural aspects of regions of conserved synteny on human chromosome 11p15.3 and mouse chromosome 7 (including genes WEE1 and LMO1).</title>
        <authorList>
            <person name="Cichutek A."/>
            <person name="Brueckmann T."/>
            <person name="Seipel B."/>
            <person name="Hauser H."/>
            <person name="Schlaubitz S."/>
            <person name="Prawitt D."/>
            <person name="Hankeln T."/>
            <person name="Schmidt E.R."/>
            <person name="Winterpacht A."/>
            <person name="Zabel B.U."/>
        </authorList>
    </citation>
    <scope>NUCLEOTIDE SEQUENCE [GENOMIC DNA]</scope>
</reference>
<reference key="3">
    <citation type="journal article" date="2005" name="Science">
        <title>The transcriptional landscape of the mammalian genome.</title>
        <authorList>
            <person name="Carninci P."/>
            <person name="Kasukawa T."/>
            <person name="Katayama S."/>
            <person name="Gough J."/>
            <person name="Frith M.C."/>
            <person name="Maeda N."/>
            <person name="Oyama R."/>
            <person name="Ravasi T."/>
            <person name="Lenhard B."/>
            <person name="Wells C."/>
            <person name="Kodzius R."/>
            <person name="Shimokawa K."/>
            <person name="Bajic V.B."/>
            <person name="Brenner S.E."/>
            <person name="Batalov S."/>
            <person name="Forrest A.R."/>
            <person name="Zavolan M."/>
            <person name="Davis M.J."/>
            <person name="Wilming L.G."/>
            <person name="Aidinis V."/>
            <person name="Allen J.E."/>
            <person name="Ambesi-Impiombato A."/>
            <person name="Apweiler R."/>
            <person name="Aturaliya R.N."/>
            <person name="Bailey T.L."/>
            <person name="Bansal M."/>
            <person name="Baxter L."/>
            <person name="Beisel K.W."/>
            <person name="Bersano T."/>
            <person name="Bono H."/>
            <person name="Chalk A.M."/>
            <person name="Chiu K.P."/>
            <person name="Choudhary V."/>
            <person name="Christoffels A."/>
            <person name="Clutterbuck D.R."/>
            <person name="Crowe M.L."/>
            <person name="Dalla E."/>
            <person name="Dalrymple B.P."/>
            <person name="de Bono B."/>
            <person name="Della Gatta G."/>
            <person name="di Bernardo D."/>
            <person name="Down T."/>
            <person name="Engstrom P."/>
            <person name="Fagiolini M."/>
            <person name="Faulkner G."/>
            <person name="Fletcher C.F."/>
            <person name="Fukushima T."/>
            <person name="Furuno M."/>
            <person name="Futaki S."/>
            <person name="Gariboldi M."/>
            <person name="Georgii-Hemming P."/>
            <person name="Gingeras T.R."/>
            <person name="Gojobori T."/>
            <person name="Green R.E."/>
            <person name="Gustincich S."/>
            <person name="Harbers M."/>
            <person name="Hayashi Y."/>
            <person name="Hensch T.K."/>
            <person name="Hirokawa N."/>
            <person name="Hill D."/>
            <person name="Huminiecki L."/>
            <person name="Iacono M."/>
            <person name="Ikeo K."/>
            <person name="Iwama A."/>
            <person name="Ishikawa T."/>
            <person name="Jakt M."/>
            <person name="Kanapin A."/>
            <person name="Katoh M."/>
            <person name="Kawasawa Y."/>
            <person name="Kelso J."/>
            <person name="Kitamura H."/>
            <person name="Kitano H."/>
            <person name="Kollias G."/>
            <person name="Krishnan S.P."/>
            <person name="Kruger A."/>
            <person name="Kummerfeld S.K."/>
            <person name="Kurochkin I.V."/>
            <person name="Lareau L.F."/>
            <person name="Lazarevic D."/>
            <person name="Lipovich L."/>
            <person name="Liu J."/>
            <person name="Liuni S."/>
            <person name="McWilliam S."/>
            <person name="Madan Babu M."/>
            <person name="Madera M."/>
            <person name="Marchionni L."/>
            <person name="Matsuda H."/>
            <person name="Matsuzawa S."/>
            <person name="Miki H."/>
            <person name="Mignone F."/>
            <person name="Miyake S."/>
            <person name="Morris K."/>
            <person name="Mottagui-Tabar S."/>
            <person name="Mulder N."/>
            <person name="Nakano N."/>
            <person name="Nakauchi H."/>
            <person name="Ng P."/>
            <person name="Nilsson R."/>
            <person name="Nishiguchi S."/>
            <person name="Nishikawa S."/>
            <person name="Nori F."/>
            <person name="Ohara O."/>
            <person name="Okazaki Y."/>
            <person name="Orlando V."/>
            <person name="Pang K.C."/>
            <person name="Pavan W.J."/>
            <person name="Pavesi G."/>
            <person name="Pesole G."/>
            <person name="Petrovsky N."/>
            <person name="Piazza S."/>
            <person name="Reed J."/>
            <person name="Reid J.F."/>
            <person name="Ring B.Z."/>
            <person name="Ringwald M."/>
            <person name="Rost B."/>
            <person name="Ruan Y."/>
            <person name="Salzberg S.L."/>
            <person name="Sandelin A."/>
            <person name="Schneider C."/>
            <person name="Schoenbach C."/>
            <person name="Sekiguchi K."/>
            <person name="Semple C.A."/>
            <person name="Seno S."/>
            <person name="Sessa L."/>
            <person name="Sheng Y."/>
            <person name="Shibata Y."/>
            <person name="Shimada H."/>
            <person name="Shimada K."/>
            <person name="Silva D."/>
            <person name="Sinclair B."/>
            <person name="Sperling S."/>
            <person name="Stupka E."/>
            <person name="Sugiura K."/>
            <person name="Sultana R."/>
            <person name="Takenaka Y."/>
            <person name="Taki K."/>
            <person name="Tammoja K."/>
            <person name="Tan S.L."/>
            <person name="Tang S."/>
            <person name="Taylor M.S."/>
            <person name="Tegner J."/>
            <person name="Teichmann S.A."/>
            <person name="Ueda H.R."/>
            <person name="van Nimwegen E."/>
            <person name="Verardo R."/>
            <person name="Wei C.L."/>
            <person name="Yagi K."/>
            <person name="Yamanishi H."/>
            <person name="Zabarovsky E."/>
            <person name="Zhu S."/>
            <person name="Zimmer A."/>
            <person name="Hide W."/>
            <person name="Bult C."/>
            <person name="Grimmond S.M."/>
            <person name="Teasdale R.D."/>
            <person name="Liu E.T."/>
            <person name="Brusic V."/>
            <person name="Quackenbush J."/>
            <person name="Wahlestedt C."/>
            <person name="Mattick J.S."/>
            <person name="Hume D.A."/>
            <person name="Kai C."/>
            <person name="Sasaki D."/>
            <person name="Tomaru Y."/>
            <person name="Fukuda S."/>
            <person name="Kanamori-Katayama M."/>
            <person name="Suzuki M."/>
            <person name="Aoki J."/>
            <person name="Arakawa T."/>
            <person name="Iida J."/>
            <person name="Imamura K."/>
            <person name="Itoh M."/>
            <person name="Kato T."/>
            <person name="Kawaji H."/>
            <person name="Kawagashira N."/>
            <person name="Kawashima T."/>
            <person name="Kojima M."/>
            <person name="Kondo S."/>
            <person name="Konno H."/>
            <person name="Nakano K."/>
            <person name="Ninomiya N."/>
            <person name="Nishio T."/>
            <person name="Okada M."/>
            <person name="Plessy C."/>
            <person name="Shibata K."/>
            <person name="Shiraki T."/>
            <person name="Suzuki S."/>
            <person name="Tagami M."/>
            <person name="Waki K."/>
            <person name="Watahiki A."/>
            <person name="Okamura-Oho Y."/>
            <person name="Suzuki H."/>
            <person name="Kawai J."/>
            <person name="Hayashizaki Y."/>
        </authorList>
    </citation>
    <scope>NUCLEOTIDE SEQUENCE [LARGE SCALE MRNA]</scope>
    <source>
        <strain>C57BL/6J</strain>
        <tissue>Embryo</tissue>
    </source>
</reference>
<reference key="4">
    <citation type="journal article" date="2004" name="Genome Res.">
        <title>The status, quality, and expansion of the NIH full-length cDNA project: the Mammalian Gene Collection (MGC).</title>
        <authorList>
            <consortium name="The MGC Project Team"/>
        </authorList>
    </citation>
    <scope>NUCLEOTIDE SEQUENCE [LARGE SCALE MRNA]</scope>
</reference>
<reference key="5">
    <citation type="journal article" date="1997" name="Biochem. Biophys. Res. Commun.">
        <title>14-3-3 zeta protein binds to the carboxyl half of mouse wee1 kinase.</title>
        <authorList>
            <person name="Honda R."/>
            <person name="Ohba Y."/>
            <person name="Yasuda H."/>
        </authorList>
    </citation>
    <scope>INTERACTION WITH 14-3-3 ZETA</scope>
</reference>
<reference key="6">
    <citation type="journal article" date="2010" name="Cell">
        <title>A tissue-specific atlas of mouse protein phosphorylation and expression.</title>
        <authorList>
            <person name="Huttlin E.L."/>
            <person name="Jedrychowski M.P."/>
            <person name="Elias J.E."/>
            <person name="Goswami T."/>
            <person name="Rad R."/>
            <person name="Beausoleil S.A."/>
            <person name="Villen J."/>
            <person name="Haas W."/>
            <person name="Sowa M.E."/>
            <person name="Gygi S.P."/>
        </authorList>
    </citation>
    <scope>PHOSPHORYLATION [LARGE SCALE ANALYSIS] AT SER-165</scope>
    <scope>IDENTIFICATION BY MASS SPECTROMETRY [LARGE SCALE ANALYSIS]</scope>
    <source>
        <tissue>Spleen</tissue>
        <tissue>Testis</tissue>
    </source>
</reference>
<keyword id="KW-0067">ATP-binding</keyword>
<keyword id="KW-0131">Cell cycle</keyword>
<keyword id="KW-0132">Cell division</keyword>
<keyword id="KW-0418">Kinase</keyword>
<keyword id="KW-0460">Magnesium</keyword>
<keyword id="KW-0479">Metal-binding</keyword>
<keyword id="KW-0498">Mitosis</keyword>
<keyword id="KW-0547">Nucleotide-binding</keyword>
<keyword id="KW-0539">Nucleus</keyword>
<keyword id="KW-0597">Phosphoprotein</keyword>
<keyword id="KW-1185">Reference proteome</keyword>
<keyword id="KW-0808">Transferase</keyword>
<keyword id="KW-0829">Tyrosine-protein kinase</keyword>
<keyword id="KW-0832">Ubl conjugation</keyword>
<feature type="chain" id="PRO_0000086811" description="Wee1-like protein kinase">
    <location>
        <begin position="1"/>
        <end position="646"/>
    </location>
</feature>
<feature type="domain" description="Protein kinase" evidence="3">
    <location>
        <begin position="298"/>
        <end position="568"/>
    </location>
</feature>
<feature type="region of interest" description="Disordered" evidence="5">
    <location>
        <begin position="1"/>
        <end position="178"/>
    </location>
</feature>
<feature type="compositionally biased region" description="Acidic residues" evidence="5">
    <location>
        <begin position="32"/>
        <end position="42"/>
    </location>
</feature>
<feature type="compositionally biased region" description="Gly residues" evidence="5">
    <location>
        <begin position="96"/>
        <end position="110"/>
    </location>
</feature>
<feature type="compositionally biased region" description="Polar residues" evidence="5">
    <location>
        <begin position="120"/>
        <end position="138"/>
    </location>
</feature>
<feature type="compositionally biased region" description="Pro residues" evidence="5">
    <location>
        <begin position="165"/>
        <end position="174"/>
    </location>
</feature>
<feature type="active site" description="Proton acceptor" evidence="3 4">
    <location>
        <position position="425"/>
    </location>
</feature>
<feature type="binding site" evidence="3">
    <location>
        <begin position="304"/>
        <end position="312"/>
    </location>
    <ligand>
        <name>ATP</name>
        <dbReference type="ChEBI" id="CHEBI:30616"/>
    </ligand>
</feature>
<feature type="binding site" evidence="3">
    <location>
        <position position="327"/>
    </location>
    <ligand>
        <name>ATP</name>
        <dbReference type="ChEBI" id="CHEBI:30616"/>
    </ligand>
</feature>
<feature type="binding site" evidence="1">
    <location>
        <position position="341"/>
    </location>
    <ligand>
        <name>Mg(2+)</name>
        <dbReference type="ChEBI" id="CHEBI:18420"/>
        <label>2</label>
    </ligand>
</feature>
<feature type="binding site" evidence="1">
    <location>
        <position position="430"/>
    </location>
    <ligand>
        <name>Mg(2+)</name>
        <dbReference type="ChEBI" id="CHEBI:18420"/>
        <label>1</label>
    </ligand>
</feature>
<feature type="binding site" evidence="1">
    <location>
        <position position="462"/>
    </location>
    <ligand>
        <name>Mg(2+)</name>
        <dbReference type="ChEBI" id="CHEBI:18420"/>
        <label>1</label>
    </ligand>
</feature>
<feature type="binding site" evidence="1">
    <location>
        <position position="464"/>
    </location>
    <ligand>
        <name>Mg(2+)</name>
        <dbReference type="ChEBI" id="CHEBI:18420"/>
        <label>2</label>
    </ligand>
</feature>
<feature type="modified residue" description="Phosphoserine; by PLK1" evidence="1">
    <location>
        <position position="52"/>
    </location>
</feature>
<feature type="modified residue" description="Phosphoserine" evidence="2">
    <location>
        <position position="78"/>
    </location>
</feature>
<feature type="modified residue" description="Phosphoserine" evidence="1">
    <location>
        <position position="85"/>
    </location>
</feature>
<feature type="modified residue" description="Phosphoserine; by CDK1" evidence="1">
    <location>
        <position position="123"/>
    </location>
</feature>
<feature type="modified residue" description="Phosphoserine" evidence="1">
    <location>
        <position position="127"/>
    </location>
</feature>
<feature type="modified residue" description="Phosphoserine" evidence="1">
    <location>
        <position position="139"/>
    </location>
</feature>
<feature type="modified residue" description="Phosphoserine" evidence="1">
    <location>
        <position position="150"/>
    </location>
</feature>
<feature type="modified residue" description="Phosphoserine" evidence="8">
    <location>
        <position position="165"/>
    </location>
</feature>
<feature type="modified residue" description="Phosphothreonine" evidence="1">
    <location>
        <position position="187"/>
    </location>
</feature>
<feature type="modified residue" description="Phosphothreonine" evidence="1">
    <location>
        <position position="190"/>
    </location>
</feature>
<feature type="modified residue" description="Phosphothreonine" evidence="1">
    <location>
        <position position="239"/>
    </location>
</feature>
<feature type="modified residue" description="Phosphoserine" evidence="1">
    <location>
        <position position="269"/>
    </location>
</feature>
<feature type="modified residue" description="Phosphoserine" evidence="1">
    <location>
        <position position="306"/>
    </location>
</feature>
<feature type="modified residue" description="Phosphoserine" evidence="1">
    <location>
        <position position="311"/>
    </location>
</feature>
<feature type="modified residue" description="Phosphoserine; by BRSK1 and BRSK2" evidence="1">
    <location>
        <position position="642"/>
    </location>
</feature>
<feature type="sequence conflict" description="In Ref. 1; BAA06404." evidence="7" ref="1">
    <original>E</original>
    <variation>Q</variation>
    <location>
        <position position="73"/>
    </location>
</feature>
<feature type="sequence conflict" description="In Ref. 1; BAA06404." evidence="7" ref="1">
    <original>D</original>
    <variation>Y</variation>
    <location>
        <position position="449"/>
    </location>
</feature>
<feature type="sequence conflict" description="In Ref. 1; BAA06404." evidence="7" ref="1">
    <original>V</original>
    <variation>D</variation>
    <location>
        <position position="466"/>
    </location>
</feature>
<feature type="sequence conflict" description="In Ref. 1; BAA06404." evidence="7" ref="1">
    <original>V</original>
    <variation>L</variation>
    <location>
        <position position="474"/>
    </location>
</feature>
<feature type="sequence conflict" description="In Ref. 1; BAA06404." evidence="7" ref="1">
    <original>Q</original>
    <variation>H</variation>
    <location>
        <position position="521"/>
    </location>
</feature>
<name>WEE1_MOUSE</name>
<organism>
    <name type="scientific">Mus musculus</name>
    <name type="common">Mouse</name>
    <dbReference type="NCBI Taxonomy" id="10090"/>
    <lineage>
        <taxon>Eukaryota</taxon>
        <taxon>Metazoa</taxon>
        <taxon>Chordata</taxon>
        <taxon>Craniata</taxon>
        <taxon>Vertebrata</taxon>
        <taxon>Euteleostomi</taxon>
        <taxon>Mammalia</taxon>
        <taxon>Eutheria</taxon>
        <taxon>Euarchontoglires</taxon>
        <taxon>Glires</taxon>
        <taxon>Rodentia</taxon>
        <taxon>Myomorpha</taxon>
        <taxon>Muroidea</taxon>
        <taxon>Muridae</taxon>
        <taxon>Murinae</taxon>
        <taxon>Mus</taxon>
        <taxon>Mus</taxon>
    </lineage>
</organism>
<evidence type="ECO:0000250" key="1">
    <source>
        <dbReference type="UniProtKB" id="P30291"/>
    </source>
</evidence>
<evidence type="ECO:0000250" key="2">
    <source>
        <dbReference type="UniProtKB" id="Q63802"/>
    </source>
</evidence>
<evidence type="ECO:0000255" key="3">
    <source>
        <dbReference type="PROSITE-ProRule" id="PRU00159"/>
    </source>
</evidence>
<evidence type="ECO:0000255" key="4">
    <source>
        <dbReference type="PROSITE-ProRule" id="PRU10027"/>
    </source>
</evidence>
<evidence type="ECO:0000256" key="5">
    <source>
        <dbReference type="SAM" id="MobiDB-lite"/>
    </source>
</evidence>
<evidence type="ECO:0000269" key="6">
    <source>
    </source>
</evidence>
<evidence type="ECO:0000305" key="7"/>
<evidence type="ECO:0007744" key="8">
    <source>
    </source>
</evidence>
<protein>
    <recommendedName>
        <fullName>Wee1-like protein kinase</fullName>
        <ecNumber evidence="1">2.7.10.2</ecNumber>
    </recommendedName>
    <alternativeName>
        <fullName>Wee1A kinase</fullName>
    </alternativeName>
</protein>
<accession>P47810</accession>
<accession>Q9EPL7</accession>
<comment type="function">
    <text evidence="1">Acts as a negative regulator of entry into mitosis (G2 to M transition) by protecting the nucleus from cytoplasmically activated cyclin B1-complexed CDK1 before the onset of mitosis by mediating phosphorylation of CDK1 on 'Tyr-15'. Specifically phosphorylates and inactivates cyclin B1-complexed CDK1 reaching a maximum during G2 phase and a minimum as cells enter M phase. Phosphorylation of cyclin B1-CDK1 occurs exclusively on 'Tyr-15' and phosphorylation of monomeric CDK1 does not occur. Its activity increases during S and G2 phases and decreases at M phase when it is hyperphosphorylated. A correlated decrease in protein level occurs at M/G1 phase, probably due to its degradation.</text>
</comment>
<comment type="catalytic activity">
    <reaction evidence="1 4">
        <text>L-tyrosyl-[protein] + ATP = O-phospho-L-tyrosyl-[protein] + ADP + H(+)</text>
        <dbReference type="Rhea" id="RHEA:10596"/>
        <dbReference type="Rhea" id="RHEA-COMP:10136"/>
        <dbReference type="Rhea" id="RHEA-COMP:20101"/>
        <dbReference type="ChEBI" id="CHEBI:15378"/>
        <dbReference type="ChEBI" id="CHEBI:30616"/>
        <dbReference type="ChEBI" id="CHEBI:46858"/>
        <dbReference type="ChEBI" id="CHEBI:61978"/>
        <dbReference type="ChEBI" id="CHEBI:456216"/>
        <dbReference type="EC" id="2.7.10.2"/>
    </reaction>
    <physiologicalReaction direction="left-to-right" evidence="1">
        <dbReference type="Rhea" id="RHEA:10597"/>
    </physiologicalReaction>
</comment>
<comment type="cofactor">
    <cofactor evidence="1">
        <name>Mg(2+)</name>
        <dbReference type="ChEBI" id="CHEBI:18420"/>
    </cofactor>
    <text evidence="1">Binds 2 magnesium ions per subunit.</text>
</comment>
<comment type="activity regulation">
    <text evidence="1">Synthesis is increased during S and G2 phases, presumably by an increase in transcription; activity is decreased by phosphorylation during M phase. Protein levels fall in M phase as a result of decreased synthesis combined with degradation. Activity seems to be negatively regulated by phosphorylation upon entry into mitosis, although N-terminal phosphorylation might also regulate the protein stability via protection from proteolysis or might regulate the subcellular location (By similarity).</text>
</comment>
<comment type="subunit">
    <text evidence="6">Binds to 14-3-3 protein zeta.</text>
</comment>
<comment type="subcellular location">
    <subcellularLocation>
        <location evidence="1">Nucleus</location>
    </subcellularLocation>
</comment>
<comment type="PTM">
    <text evidence="1">Phosphorylated during M and G1 phases. Also autophosphorylated. Phosphorylation at Ser-642 by BRSK1 and BRSK2 in post-mitotic neurons, leads to down-regulate WEE1 activity in polarized neurons. Phosphorylated at Ser-52 and Ser-123 by PLK1 and CDK1, respectively, generating an signal for degradation that can be recognized by the SCF(BTRC) complex, leading to its ubiquitination and degradation at the onset of G2/M phase (By similarity).</text>
</comment>
<comment type="PTM">
    <text evidence="1">Dephosphorylated at Thr-239 by CTDP1 (By similarity). Dephosphorylated at Ser-52 and Ser-123 by the serine/threonine-protein phosphatase 2A preventing its ubiquitin-mediated degradation (By similarity).</text>
</comment>
<comment type="PTM">
    <text evidence="1">Ubiquitinated and degraded at the onset of G2/M phase.</text>
</comment>
<comment type="similarity">
    <text evidence="3">Belongs to the protein kinase superfamily. Ser/Thr protein kinase family. WEE1 subfamily.</text>
</comment>
<dbReference type="EC" id="2.7.10.2" evidence="1"/>
<dbReference type="EMBL" id="D30743">
    <property type="protein sequence ID" value="BAA06404.1"/>
    <property type="molecule type" value="mRNA"/>
</dbReference>
<dbReference type="EMBL" id="AJ278435">
    <property type="protein sequence ID" value="CAC17145.1"/>
    <property type="molecule type" value="Genomic_DNA"/>
</dbReference>
<dbReference type="EMBL" id="AK011212">
    <property type="protein sequence ID" value="BAB27471.1"/>
    <property type="molecule type" value="mRNA"/>
</dbReference>
<dbReference type="EMBL" id="BC006852">
    <property type="protein sequence ID" value="AAH06852.1"/>
    <property type="molecule type" value="mRNA"/>
</dbReference>
<dbReference type="CCDS" id="CCDS21743.1"/>
<dbReference type="RefSeq" id="NP_033542.2">
    <property type="nucleotide sequence ID" value="NM_009516.3"/>
</dbReference>
<dbReference type="SMR" id="P47810"/>
<dbReference type="BioGRID" id="204556">
    <property type="interactions" value="4"/>
</dbReference>
<dbReference type="FunCoup" id="P47810">
    <property type="interactions" value="5410"/>
</dbReference>
<dbReference type="MINT" id="P47810"/>
<dbReference type="STRING" id="10090.ENSMUSP00000033326"/>
<dbReference type="iPTMnet" id="P47810"/>
<dbReference type="PhosphoSitePlus" id="P47810"/>
<dbReference type="jPOST" id="P47810"/>
<dbReference type="PaxDb" id="10090-ENSMUSP00000033326"/>
<dbReference type="PeptideAtlas" id="P47810"/>
<dbReference type="ProteomicsDB" id="299762"/>
<dbReference type="Pumba" id="P47810"/>
<dbReference type="Antibodypedia" id="3903">
    <property type="antibodies" value="649 antibodies from 39 providers"/>
</dbReference>
<dbReference type="DNASU" id="22390"/>
<dbReference type="Ensembl" id="ENSMUST00000033326.10">
    <property type="protein sequence ID" value="ENSMUSP00000033326.9"/>
    <property type="gene ID" value="ENSMUSG00000031016.10"/>
</dbReference>
<dbReference type="GeneID" id="22390"/>
<dbReference type="KEGG" id="mmu:22390"/>
<dbReference type="UCSC" id="uc009jey.1">
    <property type="organism name" value="mouse"/>
</dbReference>
<dbReference type="AGR" id="MGI:103075"/>
<dbReference type="CTD" id="7465"/>
<dbReference type="MGI" id="MGI:103075">
    <property type="gene designation" value="Wee1"/>
</dbReference>
<dbReference type="VEuPathDB" id="HostDB:ENSMUSG00000031016"/>
<dbReference type="eggNOG" id="KOG0601">
    <property type="taxonomic scope" value="Eukaryota"/>
</dbReference>
<dbReference type="GeneTree" id="ENSGT00940000157939"/>
<dbReference type="HOGENOM" id="CLU_000288_25_1_1"/>
<dbReference type="InParanoid" id="P47810"/>
<dbReference type="OMA" id="TIFNHPV"/>
<dbReference type="OrthoDB" id="5337378at2759"/>
<dbReference type="PhylomeDB" id="P47810"/>
<dbReference type="TreeFam" id="TF101088"/>
<dbReference type="BRENDA" id="2.7.10.2">
    <property type="organism ID" value="3474"/>
</dbReference>
<dbReference type="Reactome" id="R-MMU-156711">
    <property type="pathway name" value="Polo-like kinase mediated events"/>
</dbReference>
<dbReference type="Reactome" id="R-MMU-69202">
    <property type="pathway name" value="Cyclin E associated events during G1/S transition"/>
</dbReference>
<dbReference type="Reactome" id="R-MMU-69273">
    <property type="pathway name" value="Cyclin A/B1/B2 associated events during G2/M transition"/>
</dbReference>
<dbReference type="Reactome" id="R-MMU-69478">
    <property type="pathway name" value="G2/M DNA replication checkpoint"/>
</dbReference>
<dbReference type="Reactome" id="R-MMU-69656">
    <property type="pathway name" value="Cyclin A:Cdk2-associated events at S phase entry"/>
</dbReference>
<dbReference type="Reactome" id="R-MMU-75035">
    <property type="pathway name" value="Chk1/Chk2(Cds1) mediated inactivation of Cyclin B:Cdk1 complex"/>
</dbReference>
<dbReference type="BioGRID-ORCS" id="22390">
    <property type="hits" value="27 hits in 79 CRISPR screens"/>
</dbReference>
<dbReference type="PRO" id="PR:P47810"/>
<dbReference type="Proteomes" id="UP000000589">
    <property type="component" value="Chromosome 7"/>
</dbReference>
<dbReference type="RNAct" id="P47810">
    <property type="molecule type" value="protein"/>
</dbReference>
<dbReference type="Bgee" id="ENSMUSG00000031016">
    <property type="expression patterns" value="Expressed in endoderm of midgut and 255 other cell types or tissues"/>
</dbReference>
<dbReference type="GO" id="GO:0005737">
    <property type="term" value="C:cytoplasm"/>
    <property type="evidence" value="ECO:0000314"/>
    <property type="project" value="MGI"/>
</dbReference>
<dbReference type="GO" id="GO:0005730">
    <property type="term" value="C:nucleolus"/>
    <property type="evidence" value="ECO:0007669"/>
    <property type="project" value="Ensembl"/>
</dbReference>
<dbReference type="GO" id="GO:0005654">
    <property type="term" value="C:nucleoplasm"/>
    <property type="evidence" value="ECO:0000304"/>
    <property type="project" value="Reactome"/>
</dbReference>
<dbReference type="GO" id="GO:0005634">
    <property type="term" value="C:nucleus"/>
    <property type="evidence" value="ECO:0000250"/>
    <property type="project" value="UniProtKB"/>
</dbReference>
<dbReference type="GO" id="GO:0005524">
    <property type="term" value="F:ATP binding"/>
    <property type="evidence" value="ECO:0007669"/>
    <property type="project" value="UniProtKB-KW"/>
</dbReference>
<dbReference type="GO" id="GO:0000287">
    <property type="term" value="F:magnesium ion binding"/>
    <property type="evidence" value="ECO:0007669"/>
    <property type="project" value="InterPro"/>
</dbReference>
<dbReference type="GO" id="GO:0004715">
    <property type="term" value="F:non-membrane spanning protein tyrosine kinase activity"/>
    <property type="evidence" value="ECO:0007669"/>
    <property type="project" value="UniProtKB-EC"/>
</dbReference>
<dbReference type="GO" id="GO:0004672">
    <property type="term" value="F:protein kinase activity"/>
    <property type="evidence" value="ECO:0000314"/>
    <property type="project" value="MGI"/>
</dbReference>
<dbReference type="GO" id="GO:0004713">
    <property type="term" value="F:protein tyrosine kinase activity"/>
    <property type="evidence" value="ECO:0000250"/>
    <property type="project" value="UniProtKB"/>
</dbReference>
<dbReference type="GO" id="GO:0051301">
    <property type="term" value="P:cell division"/>
    <property type="evidence" value="ECO:0007669"/>
    <property type="project" value="UniProtKB-KW"/>
</dbReference>
<dbReference type="GO" id="GO:0030010">
    <property type="term" value="P:establishment of cell polarity"/>
    <property type="evidence" value="ECO:0000315"/>
    <property type="project" value="MGI"/>
</dbReference>
<dbReference type="GO" id="GO:0000226">
    <property type="term" value="P:microtubule cytoskeleton organization"/>
    <property type="evidence" value="ECO:0000315"/>
    <property type="project" value="MGI"/>
</dbReference>
<dbReference type="GO" id="GO:0000278">
    <property type="term" value="P:mitotic cell cycle"/>
    <property type="evidence" value="ECO:0007669"/>
    <property type="project" value="InterPro"/>
</dbReference>
<dbReference type="GO" id="GO:0010972">
    <property type="term" value="P:negative regulation of G2/M transition of mitotic cell cycle"/>
    <property type="evidence" value="ECO:0000250"/>
    <property type="project" value="UniProtKB"/>
</dbReference>
<dbReference type="GO" id="GO:0048812">
    <property type="term" value="P:neuron projection morphogenesis"/>
    <property type="evidence" value="ECO:0000315"/>
    <property type="project" value="MGI"/>
</dbReference>
<dbReference type="CDD" id="cd14138">
    <property type="entry name" value="PTKc_Wee1a"/>
    <property type="match status" value="1"/>
</dbReference>
<dbReference type="FunFam" id="3.30.200.20:FF:000115">
    <property type="entry name" value="Wee1-like kinase 2"/>
    <property type="match status" value="1"/>
</dbReference>
<dbReference type="FunFam" id="1.10.510.10:FF:000217">
    <property type="entry name" value="Wee1-like protein kinase"/>
    <property type="match status" value="1"/>
</dbReference>
<dbReference type="Gene3D" id="3.30.200.20">
    <property type="entry name" value="Phosphorylase Kinase, domain 1"/>
    <property type="match status" value="1"/>
</dbReference>
<dbReference type="Gene3D" id="1.10.510.10">
    <property type="entry name" value="Transferase(Phosphotransferase) domain 1"/>
    <property type="match status" value="1"/>
</dbReference>
<dbReference type="InterPro" id="IPR050339">
    <property type="entry name" value="CC_SR_Kinase"/>
</dbReference>
<dbReference type="InterPro" id="IPR011009">
    <property type="entry name" value="Kinase-like_dom_sf"/>
</dbReference>
<dbReference type="InterPro" id="IPR000719">
    <property type="entry name" value="Prot_kinase_dom"/>
</dbReference>
<dbReference type="InterPro" id="IPR017441">
    <property type="entry name" value="Protein_kinase_ATP_BS"/>
</dbReference>
<dbReference type="InterPro" id="IPR008271">
    <property type="entry name" value="Ser/Thr_kinase_AS"/>
</dbReference>
<dbReference type="InterPro" id="IPR017164">
    <property type="entry name" value="Wee1-like_protein_kinase"/>
</dbReference>
<dbReference type="PANTHER" id="PTHR11042">
    <property type="entry name" value="EUKARYOTIC TRANSLATION INITIATION FACTOR 2-ALPHA KINASE EIF2-ALPHA KINASE -RELATED"/>
    <property type="match status" value="1"/>
</dbReference>
<dbReference type="PANTHER" id="PTHR11042:SF72">
    <property type="entry name" value="WEE1-LIKE PROTEIN KINASE"/>
    <property type="match status" value="1"/>
</dbReference>
<dbReference type="Pfam" id="PF00069">
    <property type="entry name" value="Pkinase"/>
    <property type="match status" value="1"/>
</dbReference>
<dbReference type="PIRSF" id="PIRSF037281">
    <property type="entry name" value="Wee1-like_protein_kinase"/>
    <property type="match status" value="1"/>
</dbReference>
<dbReference type="SMART" id="SM00220">
    <property type="entry name" value="S_TKc"/>
    <property type="match status" value="1"/>
</dbReference>
<dbReference type="SUPFAM" id="SSF56112">
    <property type="entry name" value="Protein kinase-like (PK-like)"/>
    <property type="match status" value="1"/>
</dbReference>
<dbReference type="PROSITE" id="PS00107">
    <property type="entry name" value="PROTEIN_KINASE_ATP"/>
    <property type="match status" value="1"/>
</dbReference>
<dbReference type="PROSITE" id="PS50011">
    <property type="entry name" value="PROTEIN_KINASE_DOM"/>
    <property type="match status" value="1"/>
</dbReference>
<dbReference type="PROSITE" id="PS00108">
    <property type="entry name" value="PROTEIN_KINASE_ST"/>
    <property type="match status" value="1"/>
</dbReference>
<proteinExistence type="evidence at protein level"/>